<feature type="signal peptide" evidence="1">
    <location>
        <begin position="1"/>
        <end position="21"/>
    </location>
</feature>
<feature type="chain" id="PRO_0000042559" description="Uncharacterized protein YbfA">
    <location>
        <begin position="22"/>
        <end position="68"/>
    </location>
</feature>
<organism>
    <name type="scientific">Shigella flexneri</name>
    <dbReference type="NCBI Taxonomy" id="623"/>
    <lineage>
        <taxon>Bacteria</taxon>
        <taxon>Pseudomonadati</taxon>
        <taxon>Pseudomonadota</taxon>
        <taxon>Gammaproteobacteria</taxon>
        <taxon>Enterobacterales</taxon>
        <taxon>Enterobacteriaceae</taxon>
        <taxon>Shigella</taxon>
    </lineage>
</organism>
<proteinExistence type="inferred from homology"/>
<dbReference type="EMBL" id="AE005674">
    <property type="protein sequence ID" value="AAN42239.1"/>
    <property type="molecule type" value="Genomic_DNA"/>
</dbReference>
<dbReference type="EMBL" id="AE014073">
    <property type="protein sequence ID" value="AAP16110.1"/>
    <property type="molecule type" value="Genomic_DNA"/>
</dbReference>
<dbReference type="RefSeq" id="NP_706532.1">
    <property type="nucleotide sequence ID" value="NC_004337.2"/>
</dbReference>
<dbReference type="RefSeq" id="WP_000424924.1">
    <property type="nucleotide sequence ID" value="NZ_WPGW01000002.1"/>
</dbReference>
<dbReference type="STRING" id="198214.SF0597"/>
<dbReference type="PaxDb" id="198214-SF0597"/>
<dbReference type="GeneID" id="1023519"/>
<dbReference type="KEGG" id="sfl:SF0597"/>
<dbReference type="KEGG" id="sfx:S0608"/>
<dbReference type="PATRIC" id="fig|198214.7.peg.693"/>
<dbReference type="HOGENOM" id="CLU_179850_0_0_6"/>
<dbReference type="Proteomes" id="UP000001006">
    <property type="component" value="Chromosome"/>
</dbReference>
<dbReference type="Proteomes" id="UP000002673">
    <property type="component" value="Chromosome"/>
</dbReference>
<dbReference type="InterPro" id="IPR019663">
    <property type="entry name" value="YbfA"/>
</dbReference>
<dbReference type="Pfam" id="PF10725">
    <property type="entry name" value="DUF2517"/>
    <property type="match status" value="1"/>
</dbReference>
<name>YBFA_SHIFL</name>
<sequence>MELYREYPAWLIFLRRTYAVAAGVLALPFMLFWKDRARFYSYLHRVWSKTSDKPVWMDQAEKATGDFY</sequence>
<keyword id="KW-1185">Reference proteome</keyword>
<keyword id="KW-0732">Signal</keyword>
<evidence type="ECO:0000255" key="1"/>
<accession>P0AAU4</accession>
<accession>P28913</accession>
<protein>
    <recommendedName>
        <fullName>Uncharacterized protein YbfA</fullName>
    </recommendedName>
</protein>
<gene>
    <name type="primary">ybfA</name>
    <name type="ordered locus">SF0597</name>
    <name type="ordered locus">S0608</name>
</gene>
<reference key="1">
    <citation type="journal article" date="2002" name="Nucleic Acids Res.">
        <title>Genome sequence of Shigella flexneri 2a: insights into pathogenicity through comparison with genomes of Escherichia coli K12 and O157.</title>
        <authorList>
            <person name="Jin Q."/>
            <person name="Yuan Z."/>
            <person name="Xu J."/>
            <person name="Wang Y."/>
            <person name="Shen Y."/>
            <person name="Lu W."/>
            <person name="Wang J."/>
            <person name="Liu H."/>
            <person name="Yang J."/>
            <person name="Yang F."/>
            <person name="Zhang X."/>
            <person name="Zhang J."/>
            <person name="Yang G."/>
            <person name="Wu H."/>
            <person name="Qu D."/>
            <person name="Dong J."/>
            <person name="Sun L."/>
            <person name="Xue Y."/>
            <person name="Zhao A."/>
            <person name="Gao Y."/>
            <person name="Zhu J."/>
            <person name="Kan B."/>
            <person name="Ding K."/>
            <person name="Chen S."/>
            <person name="Cheng H."/>
            <person name="Yao Z."/>
            <person name="He B."/>
            <person name="Chen R."/>
            <person name="Ma D."/>
            <person name="Qiang B."/>
            <person name="Wen Y."/>
            <person name="Hou Y."/>
            <person name="Yu J."/>
        </authorList>
    </citation>
    <scope>NUCLEOTIDE SEQUENCE [LARGE SCALE GENOMIC DNA]</scope>
    <source>
        <strain>301 / Serotype 2a</strain>
    </source>
</reference>
<reference key="2">
    <citation type="journal article" date="2003" name="Infect. Immun.">
        <title>Complete genome sequence and comparative genomics of Shigella flexneri serotype 2a strain 2457T.</title>
        <authorList>
            <person name="Wei J."/>
            <person name="Goldberg M.B."/>
            <person name="Burland V."/>
            <person name="Venkatesan M.M."/>
            <person name="Deng W."/>
            <person name="Fournier G."/>
            <person name="Mayhew G.F."/>
            <person name="Plunkett G. III"/>
            <person name="Rose D.J."/>
            <person name="Darling A."/>
            <person name="Mau B."/>
            <person name="Perna N.T."/>
            <person name="Payne S.M."/>
            <person name="Runyen-Janecky L.J."/>
            <person name="Zhou S."/>
            <person name="Schwartz D.C."/>
            <person name="Blattner F.R."/>
        </authorList>
    </citation>
    <scope>NUCLEOTIDE SEQUENCE [LARGE SCALE GENOMIC DNA]</scope>
    <source>
        <strain>ATCC 700930 / 2457T / Serotype 2a</strain>
    </source>
</reference>